<reference key="1">
    <citation type="journal article" date="2009" name="PLoS Genet.">
        <title>Organised genome dynamics in the Escherichia coli species results in highly diverse adaptive paths.</title>
        <authorList>
            <person name="Touchon M."/>
            <person name="Hoede C."/>
            <person name="Tenaillon O."/>
            <person name="Barbe V."/>
            <person name="Baeriswyl S."/>
            <person name="Bidet P."/>
            <person name="Bingen E."/>
            <person name="Bonacorsi S."/>
            <person name="Bouchier C."/>
            <person name="Bouvet O."/>
            <person name="Calteau A."/>
            <person name="Chiapello H."/>
            <person name="Clermont O."/>
            <person name="Cruveiller S."/>
            <person name="Danchin A."/>
            <person name="Diard M."/>
            <person name="Dossat C."/>
            <person name="Karoui M.E."/>
            <person name="Frapy E."/>
            <person name="Garry L."/>
            <person name="Ghigo J.M."/>
            <person name="Gilles A.M."/>
            <person name="Johnson J."/>
            <person name="Le Bouguenec C."/>
            <person name="Lescat M."/>
            <person name="Mangenot S."/>
            <person name="Martinez-Jehanne V."/>
            <person name="Matic I."/>
            <person name="Nassif X."/>
            <person name="Oztas S."/>
            <person name="Petit M.A."/>
            <person name="Pichon C."/>
            <person name="Rouy Z."/>
            <person name="Ruf C.S."/>
            <person name="Schneider D."/>
            <person name="Tourret J."/>
            <person name="Vacherie B."/>
            <person name="Vallenet D."/>
            <person name="Medigue C."/>
            <person name="Rocha E.P.C."/>
            <person name="Denamur E."/>
        </authorList>
    </citation>
    <scope>NUCLEOTIDE SEQUENCE [LARGE SCALE GENOMIC DNA]</scope>
    <source>
        <strain>IAI39 / ExPEC</strain>
    </source>
</reference>
<keyword id="KW-0963">Cytoplasm</keyword>
<keyword id="KW-0255">Endonuclease</keyword>
<keyword id="KW-0378">Hydrolase</keyword>
<keyword id="KW-0464">Manganese</keyword>
<keyword id="KW-0479">Metal-binding</keyword>
<keyword id="KW-0540">Nuclease</keyword>
<sequence>MIEFVYPHTQLVAGVDEVGRGPLVGAVVTAAVILDPARPIAGLNDSKKLSEKRRLALCEEIKEKALSWSLGRAEPHEIDELNILHATMLAMQRAVAGLHIAPEYVLIDGNRCPKLPMPAMAVVKGDSRVPEISAASILAKVTRDAEMAALDIVFPQYGFAQHKGYPTAFHLEKLAEHGATEHHRRSFGPVKRALGLAS</sequence>
<accession>B7NIE5</accession>
<evidence type="ECO:0000255" key="1">
    <source>
        <dbReference type="HAMAP-Rule" id="MF_00052"/>
    </source>
</evidence>
<evidence type="ECO:0000255" key="2">
    <source>
        <dbReference type="PROSITE-ProRule" id="PRU01319"/>
    </source>
</evidence>
<protein>
    <recommendedName>
        <fullName evidence="1">Ribonuclease HII</fullName>
        <shortName evidence="1">RNase HII</shortName>
        <ecNumber evidence="1">3.1.26.4</ecNumber>
    </recommendedName>
</protein>
<name>RNH2_ECO7I</name>
<organism>
    <name type="scientific">Escherichia coli O7:K1 (strain IAI39 / ExPEC)</name>
    <dbReference type="NCBI Taxonomy" id="585057"/>
    <lineage>
        <taxon>Bacteria</taxon>
        <taxon>Pseudomonadati</taxon>
        <taxon>Pseudomonadota</taxon>
        <taxon>Gammaproteobacteria</taxon>
        <taxon>Enterobacterales</taxon>
        <taxon>Enterobacteriaceae</taxon>
        <taxon>Escherichia</taxon>
    </lineage>
</organism>
<dbReference type="EC" id="3.1.26.4" evidence="1"/>
<dbReference type="EMBL" id="CU928164">
    <property type="protein sequence ID" value="CAR16326.1"/>
    <property type="molecule type" value="Genomic_DNA"/>
</dbReference>
<dbReference type="RefSeq" id="WP_000569419.1">
    <property type="nucleotide sequence ID" value="NC_011750.1"/>
</dbReference>
<dbReference type="RefSeq" id="YP_002406232.1">
    <property type="nucleotide sequence ID" value="NC_011750.1"/>
</dbReference>
<dbReference type="SMR" id="B7NIE5"/>
<dbReference type="STRING" id="585057.ECIAI39_0186"/>
<dbReference type="KEGG" id="ect:ECIAI39_0186"/>
<dbReference type="PATRIC" id="fig|585057.6.peg.199"/>
<dbReference type="HOGENOM" id="CLU_036532_3_2_6"/>
<dbReference type="Proteomes" id="UP000000749">
    <property type="component" value="Chromosome"/>
</dbReference>
<dbReference type="GO" id="GO:0005737">
    <property type="term" value="C:cytoplasm"/>
    <property type="evidence" value="ECO:0007669"/>
    <property type="project" value="UniProtKB-SubCell"/>
</dbReference>
<dbReference type="GO" id="GO:0032299">
    <property type="term" value="C:ribonuclease H2 complex"/>
    <property type="evidence" value="ECO:0007669"/>
    <property type="project" value="TreeGrafter"/>
</dbReference>
<dbReference type="GO" id="GO:0030145">
    <property type="term" value="F:manganese ion binding"/>
    <property type="evidence" value="ECO:0007669"/>
    <property type="project" value="UniProtKB-UniRule"/>
</dbReference>
<dbReference type="GO" id="GO:0003723">
    <property type="term" value="F:RNA binding"/>
    <property type="evidence" value="ECO:0007669"/>
    <property type="project" value="InterPro"/>
</dbReference>
<dbReference type="GO" id="GO:0004523">
    <property type="term" value="F:RNA-DNA hybrid ribonuclease activity"/>
    <property type="evidence" value="ECO:0007669"/>
    <property type="project" value="UniProtKB-UniRule"/>
</dbReference>
<dbReference type="GO" id="GO:0043137">
    <property type="term" value="P:DNA replication, removal of RNA primer"/>
    <property type="evidence" value="ECO:0007669"/>
    <property type="project" value="TreeGrafter"/>
</dbReference>
<dbReference type="GO" id="GO:0006298">
    <property type="term" value="P:mismatch repair"/>
    <property type="evidence" value="ECO:0007669"/>
    <property type="project" value="TreeGrafter"/>
</dbReference>
<dbReference type="CDD" id="cd07182">
    <property type="entry name" value="RNase_HII_bacteria_HII_like"/>
    <property type="match status" value="1"/>
</dbReference>
<dbReference type="FunFam" id="3.30.420.10:FF:000006">
    <property type="entry name" value="Ribonuclease HII"/>
    <property type="match status" value="1"/>
</dbReference>
<dbReference type="Gene3D" id="3.30.420.10">
    <property type="entry name" value="Ribonuclease H-like superfamily/Ribonuclease H"/>
    <property type="match status" value="1"/>
</dbReference>
<dbReference type="HAMAP" id="MF_00052_B">
    <property type="entry name" value="RNase_HII_B"/>
    <property type="match status" value="1"/>
</dbReference>
<dbReference type="InterPro" id="IPR022898">
    <property type="entry name" value="RNase_HII"/>
</dbReference>
<dbReference type="InterPro" id="IPR001352">
    <property type="entry name" value="RNase_HII/HIII"/>
</dbReference>
<dbReference type="InterPro" id="IPR024567">
    <property type="entry name" value="RNase_HII/HIII_dom"/>
</dbReference>
<dbReference type="InterPro" id="IPR012337">
    <property type="entry name" value="RNaseH-like_sf"/>
</dbReference>
<dbReference type="InterPro" id="IPR036397">
    <property type="entry name" value="RNaseH_sf"/>
</dbReference>
<dbReference type="NCBIfam" id="NF000594">
    <property type="entry name" value="PRK00015.1-1"/>
    <property type="match status" value="1"/>
</dbReference>
<dbReference type="NCBIfam" id="NF000595">
    <property type="entry name" value="PRK00015.1-3"/>
    <property type="match status" value="1"/>
</dbReference>
<dbReference type="NCBIfam" id="NF000596">
    <property type="entry name" value="PRK00015.1-4"/>
    <property type="match status" value="1"/>
</dbReference>
<dbReference type="PANTHER" id="PTHR10954">
    <property type="entry name" value="RIBONUCLEASE H2 SUBUNIT A"/>
    <property type="match status" value="1"/>
</dbReference>
<dbReference type="PANTHER" id="PTHR10954:SF18">
    <property type="entry name" value="RIBONUCLEASE HII"/>
    <property type="match status" value="1"/>
</dbReference>
<dbReference type="Pfam" id="PF01351">
    <property type="entry name" value="RNase_HII"/>
    <property type="match status" value="1"/>
</dbReference>
<dbReference type="SUPFAM" id="SSF53098">
    <property type="entry name" value="Ribonuclease H-like"/>
    <property type="match status" value="1"/>
</dbReference>
<dbReference type="PROSITE" id="PS51975">
    <property type="entry name" value="RNASE_H_2"/>
    <property type="match status" value="1"/>
</dbReference>
<proteinExistence type="inferred from homology"/>
<comment type="function">
    <text evidence="1">Endonuclease that specifically degrades the RNA of RNA-DNA hybrids.</text>
</comment>
<comment type="catalytic activity">
    <reaction evidence="1">
        <text>Endonucleolytic cleavage to 5'-phosphomonoester.</text>
        <dbReference type="EC" id="3.1.26.4"/>
    </reaction>
</comment>
<comment type="cofactor">
    <cofactor evidence="1">
        <name>Mn(2+)</name>
        <dbReference type="ChEBI" id="CHEBI:29035"/>
    </cofactor>
    <cofactor evidence="1">
        <name>Mg(2+)</name>
        <dbReference type="ChEBI" id="CHEBI:18420"/>
    </cofactor>
    <text evidence="1">Manganese or magnesium. Binds 1 divalent metal ion per monomer in the absence of substrate. May bind a second metal ion after substrate binding.</text>
</comment>
<comment type="subcellular location">
    <subcellularLocation>
        <location evidence="1">Cytoplasm</location>
    </subcellularLocation>
</comment>
<comment type="similarity">
    <text evidence="1">Belongs to the RNase HII family.</text>
</comment>
<gene>
    <name evidence="1" type="primary">rnhB</name>
    <name type="ordered locus">ECIAI39_0186</name>
</gene>
<feature type="chain" id="PRO_1000116844" description="Ribonuclease HII">
    <location>
        <begin position="1"/>
        <end position="198"/>
    </location>
</feature>
<feature type="domain" description="RNase H type-2" evidence="2">
    <location>
        <begin position="10"/>
        <end position="198"/>
    </location>
</feature>
<feature type="binding site" evidence="1">
    <location>
        <position position="16"/>
    </location>
    <ligand>
        <name>a divalent metal cation</name>
        <dbReference type="ChEBI" id="CHEBI:60240"/>
    </ligand>
</feature>
<feature type="binding site" evidence="1">
    <location>
        <position position="17"/>
    </location>
    <ligand>
        <name>a divalent metal cation</name>
        <dbReference type="ChEBI" id="CHEBI:60240"/>
    </ligand>
</feature>
<feature type="binding site" evidence="1">
    <location>
        <position position="108"/>
    </location>
    <ligand>
        <name>a divalent metal cation</name>
        <dbReference type="ChEBI" id="CHEBI:60240"/>
    </ligand>
</feature>